<gene>
    <name type="primary">yolB</name>
    <name type="ordered locus">BSU21530</name>
</gene>
<accession>O31993</accession>
<proteinExistence type="predicted"/>
<feature type="chain" id="PRO_0000360587" description="SPbeta prophage-derived uncharacterized protein YolB">
    <location>
        <begin position="1"/>
        <end position="118"/>
    </location>
</feature>
<reference key="1">
    <citation type="journal article" date="1997" name="Nature">
        <title>The complete genome sequence of the Gram-positive bacterium Bacillus subtilis.</title>
        <authorList>
            <person name="Kunst F."/>
            <person name="Ogasawara N."/>
            <person name="Moszer I."/>
            <person name="Albertini A.M."/>
            <person name="Alloni G."/>
            <person name="Azevedo V."/>
            <person name="Bertero M.G."/>
            <person name="Bessieres P."/>
            <person name="Bolotin A."/>
            <person name="Borchert S."/>
            <person name="Borriss R."/>
            <person name="Boursier L."/>
            <person name="Brans A."/>
            <person name="Braun M."/>
            <person name="Brignell S.C."/>
            <person name="Bron S."/>
            <person name="Brouillet S."/>
            <person name="Bruschi C.V."/>
            <person name="Caldwell B."/>
            <person name="Capuano V."/>
            <person name="Carter N.M."/>
            <person name="Choi S.-K."/>
            <person name="Codani J.-J."/>
            <person name="Connerton I.F."/>
            <person name="Cummings N.J."/>
            <person name="Daniel R.A."/>
            <person name="Denizot F."/>
            <person name="Devine K.M."/>
            <person name="Duesterhoeft A."/>
            <person name="Ehrlich S.D."/>
            <person name="Emmerson P.T."/>
            <person name="Entian K.-D."/>
            <person name="Errington J."/>
            <person name="Fabret C."/>
            <person name="Ferrari E."/>
            <person name="Foulger D."/>
            <person name="Fritz C."/>
            <person name="Fujita M."/>
            <person name="Fujita Y."/>
            <person name="Fuma S."/>
            <person name="Galizzi A."/>
            <person name="Galleron N."/>
            <person name="Ghim S.-Y."/>
            <person name="Glaser P."/>
            <person name="Goffeau A."/>
            <person name="Golightly E.J."/>
            <person name="Grandi G."/>
            <person name="Guiseppi G."/>
            <person name="Guy B.J."/>
            <person name="Haga K."/>
            <person name="Haiech J."/>
            <person name="Harwood C.R."/>
            <person name="Henaut A."/>
            <person name="Hilbert H."/>
            <person name="Holsappel S."/>
            <person name="Hosono S."/>
            <person name="Hullo M.-F."/>
            <person name="Itaya M."/>
            <person name="Jones L.-M."/>
            <person name="Joris B."/>
            <person name="Karamata D."/>
            <person name="Kasahara Y."/>
            <person name="Klaerr-Blanchard M."/>
            <person name="Klein C."/>
            <person name="Kobayashi Y."/>
            <person name="Koetter P."/>
            <person name="Koningstein G."/>
            <person name="Krogh S."/>
            <person name="Kumano M."/>
            <person name="Kurita K."/>
            <person name="Lapidus A."/>
            <person name="Lardinois S."/>
            <person name="Lauber J."/>
            <person name="Lazarevic V."/>
            <person name="Lee S.-M."/>
            <person name="Levine A."/>
            <person name="Liu H."/>
            <person name="Masuda S."/>
            <person name="Mauel C."/>
            <person name="Medigue C."/>
            <person name="Medina N."/>
            <person name="Mellado R.P."/>
            <person name="Mizuno M."/>
            <person name="Moestl D."/>
            <person name="Nakai S."/>
            <person name="Noback M."/>
            <person name="Noone D."/>
            <person name="O'Reilly M."/>
            <person name="Ogawa K."/>
            <person name="Ogiwara A."/>
            <person name="Oudega B."/>
            <person name="Park S.-H."/>
            <person name="Parro V."/>
            <person name="Pohl T.M."/>
            <person name="Portetelle D."/>
            <person name="Porwollik S."/>
            <person name="Prescott A.M."/>
            <person name="Presecan E."/>
            <person name="Pujic P."/>
            <person name="Purnelle B."/>
            <person name="Rapoport G."/>
            <person name="Rey M."/>
            <person name="Reynolds S."/>
            <person name="Rieger M."/>
            <person name="Rivolta C."/>
            <person name="Rocha E."/>
            <person name="Roche B."/>
            <person name="Rose M."/>
            <person name="Sadaie Y."/>
            <person name="Sato T."/>
            <person name="Scanlan E."/>
            <person name="Schleich S."/>
            <person name="Schroeter R."/>
            <person name="Scoffone F."/>
            <person name="Sekiguchi J."/>
            <person name="Sekowska A."/>
            <person name="Seror S.J."/>
            <person name="Serror P."/>
            <person name="Shin B.-S."/>
            <person name="Soldo B."/>
            <person name="Sorokin A."/>
            <person name="Tacconi E."/>
            <person name="Takagi T."/>
            <person name="Takahashi H."/>
            <person name="Takemaru K."/>
            <person name="Takeuchi M."/>
            <person name="Tamakoshi A."/>
            <person name="Tanaka T."/>
            <person name="Terpstra P."/>
            <person name="Tognoni A."/>
            <person name="Tosato V."/>
            <person name="Uchiyama S."/>
            <person name="Vandenbol M."/>
            <person name="Vannier F."/>
            <person name="Vassarotti A."/>
            <person name="Viari A."/>
            <person name="Wambutt R."/>
            <person name="Wedler E."/>
            <person name="Wedler H."/>
            <person name="Weitzenegger T."/>
            <person name="Winters P."/>
            <person name="Wipat A."/>
            <person name="Yamamoto H."/>
            <person name="Yamane K."/>
            <person name="Yasumoto K."/>
            <person name="Yata K."/>
            <person name="Yoshida K."/>
            <person name="Yoshikawa H.-F."/>
            <person name="Zumstein E."/>
            <person name="Yoshikawa H."/>
            <person name="Danchin A."/>
        </authorList>
    </citation>
    <scope>NUCLEOTIDE SEQUENCE [LARGE SCALE GENOMIC DNA]</scope>
    <source>
        <strain>168</strain>
    </source>
</reference>
<name>YOLB_BACSU</name>
<organism>
    <name type="scientific">Bacillus subtilis (strain 168)</name>
    <dbReference type="NCBI Taxonomy" id="224308"/>
    <lineage>
        <taxon>Bacteria</taxon>
        <taxon>Bacillati</taxon>
        <taxon>Bacillota</taxon>
        <taxon>Bacilli</taxon>
        <taxon>Bacillales</taxon>
        <taxon>Bacillaceae</taxon>
        <taxon>Bacillus</taxon>
    </lineage>
</organism>
<keyword id="KW-1185">Reference proteome</keyword>
<dbReference type="EMBL" id="AL009126">
    <property type="protein sequence ID" value="CAB14071.1"/>
    <property type="molecule type" value="Genomic_DNA"/>
</dbReference>
<dbReference type="RefSeq" id="NP_390036.1">
    <property type="nucleotide sequence ID" value="NC_000964.3"/>
</dbReference>
<dbReference type="RefSeq" id="WP_004398595.1">
    <property type="nucleotide sequence ID" value="NZ_OZ025638.1"/>
</dbReference>
<dbReference type="FunCoup" id="O31993">
    <property type="interactions" value="103"/>
</dbReference>
<dbReference type="STRING" id="224308.BSU21530"/>
<dbReference type="PaxDb" id="224308-BSU21530"/>
<dbReference type="EnsemblBacteria" id="CAB14071">
    <property type="protein sequence ID" value="CAB14071"/>
    <property type="gene ID" value="BSU_21530"/>
</dbReference>
<dbReference type="GeneID" id="939119"/>
<dbReference type="KEGG" id="bsu:BSU21530"/>
<dbReference type="PATRIC" id="fig|224308.179.peg.2350"/>
<dbReference type="InParanoid" id="O31993"/>
<dbReference type="OrthoDB" id="2905294at2"/>
<dbReference type="BioCyc" id="BSUB:BSU21530-MONOMER"/>
<dbReference type="Proteomes" id="UP000001570">
    <property type="component" value="Chromosome"/>
</dbReference>
<protein>
    <recommendedName>
        <fullName>SPbeta prophage-derived uncharacterized protein YolB</fullName>
    </recommendedName>
</protein>
<sequence>MISTSNYDVTKDPKFLAFCSLATEGYGQNNTQQSSIGFNEFCEKLEKNAIVKPENKKSTLDLNKSLEDWKLRFTAGGNLSTMDSQVLDVIKKAYNLGMVNKDNMLLRNEAINAYRNSI</sequence>